<protein>
    <recommendedName>
        <fullName>Pro-neuropeptide Y</fullName>
    </recommendedName>
    <component>
        <recommendedName>
            <fullName>Neuropeptide Y</fullName>
        </recommendedName>
        <alternativeName>
            <fullName>Neuropeptide tyrosine</fullName>
            <shortName>NPY</shortName>
        </alternativeName>
    </component>
    <component>
        <recommendedName>
            <fullName>C-flanking peptide of NPY</fullName>
            <shortName>CPON</shortName>
        </recommendedName>
    </component>
</protein>
<sequence>MLGSKRLGLSGLTLALSLLVCLGALAEAYPSKPDNPGEDAPAEDLARYYSALRHYINLITRQRYGKRSSPETLISDLLMRESTGNIPRTRLEDPSMW</sequence>
<organism>
    <name type="scientific">Bos taurus</name>
    <name type="common">Bovine</name>
    <dbReference type="NCBI Taxonomy" id="9913"/>
    <lineage>
        <taxon>Eukaryota</taxon>
        <taxon>Metazoa</taxon>
        <taxon>Chordata</taxon>
        <taxon>Craniata</taxon>
        <taxon>Vertebrata</taxon>
        <taxon>Euteleostomi</taxon>
        <taxon>Mammalia</taxon>
        <taxon>Eutheria</taxon>
        <taxon>Laurasiatheria</taxon>
        <taxon>Artiodactyla</taxon>
        <taxon>Ruminantia</taxon>
        <taxon>Pecora</taxon>
        <taxon>Bovidae</taxon>
        <taxon>Bovinae</taxon>
        <taxon>Bos</taxon>
    </lineage>
</organism>
<accession>Q6RUW3</accession>
<accession>A2VDW2</accession>
<evidence type="ECO:0000250" key="1"/>
<evidence type="ECO:0000250" key="2">
    <source>
        <dbReference type="UniProtKB" id="P01303"/>
    </source>
</evidence>
<evidence type="ECO:0000250" key="3">
    <source>
        <dbReference type="UniProtKB" id="P07808"/>
    </source>
</evidence>
<evidence type="ECO:0000305" key="4"/>
<keyword id="KW-0027">Amidation</keyword>
<keyword id="KW-0165">Cleavage on pair of basic residues</keyword>
<keyword id="KW-0968">Cytoplasmic vesicle</keyword>
<keyword id="KW-0527">Neuropeptide</keyword>
<keyword id="KW-0597">Phosphoprotein</keyword>
<keyword id="KW-1185">Reference proteome</keyword>
<keyword id="KW-0964">Secreted</keyword>
<keyword id="KW-0732">Signal</keyword>
<dbReference type="EMBL" id="AY491054">
    <property type="protein sequence ID" value="AAR37328.1"/>
    <property type="molecule type" value="Genomic_DNA"/>
</dbReference>
<dbReference type="EMBL" id="BC133432">
    <property type="protein sequence ID" value="AAI33433.1"/>
    <property type="molecule type" value="mRNA"/>
</dbReference>
<dbReference type="RefSeq" id="NP_001014845.1">
    <property type="nucleotide sequence ID" value="NM_001014845.3"/>
</dbReference>
<dbReference type="RefSeq" id="XP_010802617.1">
    <property type="nucleotide sequence ID" value="XM_010804315.4"/>
</dbReference>
<dbReference type="RefSeq" id="XP_010802618.1">
    <property type="nucleotide sequence ID" value="XM_010804316.4"/>
</dbReference>
<dbReference type="FunCoup" id="Q6RUW3">
    <property type="interactions" value="114"/>
</dbReference>
<dbReference type="STRING" id="9913.ENSBTAP00000061725"/>
<dbReference type="PaxDb" id="9913-ENSBTAP00000005903"/>
<dbReference type="GeneID" id="504216"/>
<dbReference type="KEGG" id="bta:504216"/>
<dbReference type="CTD" id="4852"/>
<dbReference type="VEuPathDB" id="HostDB:ENSBTAG00000004503"/>
<dbReference type="eggNOG" id="ENOG502S2BU">
    <property type="taxonomic scope" value="Eukaryota"/>
</dbReference>
<dbReference type="HOGENOM" id="CLU_162379_1_0_1"/>
<dbReference type="InParanoid" id="Q6RUW3"/>
<dbReference type="OMA" id="YEDPAMW"/>
<dbReference type="OrthoDB" id="9852947at2759"/>
<dbReference type="TreeFam" id="TF332778"/>
<dbReference type="Reactome" id="R-BTA-375276">
    <property type="pathway name" value="Peptide ligand-binding receptors"/>
</dbReference>
<dbReference type="Reactome" id="R-BTA-418594">
    <property type="pathway name" value="G alpha (i) signalling events"/>
</dbReference>
<dbReference type="Proteomes" id="UP000009136">
    <property type="component" value="Chromosome 4"/>
</dbReference>
<dbReference type="Bgee" id="ENSBTAG00000004503">
    <property type="expression patterns" value="Expressed in pigment epithelium of eye and 62 other cell types or tissues"/>
</dbReference>
<dbReference type="GO" id="GO:0005615">
    <property type="term" value="C:extracellular space"/>
    <property type="evidence" value="ECO:0000250"/>
    <property type="project" value="HGNC-UCL"/>
</dbReference>
<dbReference type="GO" id="GO:0098982">
    <property type="term" value="C:GABA-ergic synapse"/>
    <property type="evidence" value="ECO:0007669"/>
    <property type="project" value="Ensembl"/>
</dbReference>
<dbReference type="GO" id="GO:0005794">
    <property type="term" value="C:Golgi apparatus"/>
    <property type="evidence" value="ECO:0007669"/>
    <property type="project" value="Ensembl"/>
</dbReference>
<dbReference type="GO" id="GO:0098992">
    <property type="term" value="C:neuronal dense core vesicle"/>
    <property type="evidence" value="ECO:0000250"/>
    <property type="project" value="UniProtKB"/>
</dbReference>
<dbReference type="GO" id="GO:0005184">
    <property type="term" value="F:neuropeptide hormone activity"/>
    <property type="evidence" value="ECO:0000318"/>
    <property type="project" value="GO_Central"/>
</dbReference>
<dbReference type="GO" id="GO:0031841">
    <property type="term" value="F:neuropeptide Y receptor binding"/>
    <property type="evidence" value="ECO:0000318"/>
    <property type="project" value="GO_Central"/>
</dbReference>
<dbReference type="GO" id="GO:0008343">
    <property type="term" value="P:adult feeding behavior"/>
    <property type="evidence" value="ECO:0000250"/>
    <property type="project" value="HGNC-UCL"/>
</dbReference>
<dbReference type="GO" id="GO:0021954">
    <property type="term" value="P:central nervous system neuron development"/>
    <property type="evidence" value="ECO:0007669"/>
    <property type="project" value="Ensembl"/>
</dbReference>
<dbReference type="GO" id="GO:0021987">
    <property type="term" value="P:cerebral cortex development"/>
    <property type="evidence" value="ECO:0007669"/>
    <property type="project" value="Ensembl"/>
</dbReference>
<dbReference type="GO" id="GO:0007631">
    <property type="term" value="P:feeding behavior"/>
    <property type="evidence" value="ECO:0000318"/>
    <property type="project" value="GO_Central"/>
</dbReference>
<dbReference type="GO" id="GO:0031175">
    <property type="term" value="P:neuron projection development"/>
    <property type="evidence" value="ECO:0007669"/>
    <property type="project" value="Ensembl"/>
</dbReference>
<dbReference type="GO" id="GO:0007218">
    <property type="term" value="P:neuropeptide signaling pathway"/>
    <property type="evidence" value="ECO:0000318"/>
    <property type="project" value="GO_Central"/>
</dbReference>
<dbReference type="GO" id="GO:0032100">
    <property type="term" value="P:positive regulation of appetite"/>
    <property type="evidence" value="ECO:0000250"/>
    <property type="project" value="HGNC-UCL"/>
</dbReference>
<dbReference type="GO" id="GO:0008217">
    <property type="term" value="P:regulation of blood pressure"/>
    <property type="evidence" value="ECO:0007669"/>
    <property type="project" value="Ensembl"/>
</dbReference>
<dbReference type="GO" id="GO:0099538">
    <property type="term" value="P:synaptic signaling via neuropeptide"/>
    <property type="evidence" value="ECO:0007669"/>
    <property type="project" value="Ensembl"/>
</dbReference>
<dbReference type="CDD" id="cd00126">
    <property type="entry name" value="PAH"/>
    <property type="match status" value="1"/>
</dbReference>
<dbReference type="Gene3D" id="6.10.250.900">
    <property type="match status" value="1"/>
</dbReference>
<dbReference type="InterPro" id="IPR001955">
    <property type="entry name" value="Pancreatic_hormone-like"/>
</dbReference>
<dbReference type="InterPro" id="IPR020392">
    <property type="entry name" value="Pancreatic_hormone-like_CS"/>
</dbReference>
<dbReference type="PANTHER" id="PTHR10533">
    <property type="entry name" value="NEUROPEPTIDE Y/PANCREATIC HORMONE/PEPTIDE YY"/>
    <property type="match status" value="1"/>
</dbReference>
<dbReference type="PANTHER" id="PTHR10533:SF5">
    <property type="entry name" value="PRO-NEUROPEPTIDE Y"/>
    <property type="match status" value="1"/>
</dbReference>
<dbReference type="Pfam" id="PF00159">
    <property type="entry name" value="Hormone_3"/>
    <property type="match status" value="1"/>
</dbReference>
<dbReference type="PRINTS" id="PR00278">
    <property type="entry name" value="PANCHORMONE"/>
</dbReference>
<dbReference type="SMART" id="SM00309">
    <property type="entry name" value="PAH"/>
    <property type="match status" value="1"/>
</dbReference>
<dbReference type="PROSITE" id="PS00265">
    <property type="entry name" value="PANCREATIC_HORMONE_1"/>
    <property type="match status" value="1"/>
</dbReference>
<dbReference type="PROSITE" id="PS50276">
    <property type="entry name" value="PANCREATIC_HORMONE_2"/>
    <property type="match status" value="1"/>
</dbReference>
<proteinExistence type="inferred from homology"/>
<feature type="signal peptide" evidence="1">
    <location>
        <begin position="1"/>
        <end position="28"/>
    </location>
</feature>
<feature type="peptide" id="PRO_0000234088" description="Neuropeptide Y">
    <location>
        <begin position="29"/>
        <end position="64"/>
    </location>
</feature>
<feature type="peptide" id="PRO_0000234089" description="C-flanking peptide of NPY">
    <location>
        <begin position="68"/>
        <end position="97"/>
    </location>
</feature>
<feature type="site" description="Cleavage; by FAP" evidence="2">
    <location>
        <begin position="30"/>
        <end position="31"/>
    </location>
</feature>
<feature type="modified residue" description="Tyrosine amide" evidence="1">
    <location>
        <position position="64"/>
    </location>
</feature>
<feature type="modified residue" description="Phosphothreonine" evidence="2">
    <location>
        <position position="83"/>
    </location>
</feature>
<reference key="1">
    <citation type="journal article" date="2004" name="Anim. Genet.">
        <title>Linkage mapping of NPY to bovine chromosome 4.</title>
        <authorList>
            <person name="Thue T.D."/>
            <person name="Buchanan F.C."/>
        </authorList>
    </citation>
    <scope>NUCLEOTIDE SEQUENCE [GENOMIC DNA]</scope>
</reference>
<reference key="2">
    <citation type="submission" date="2007-02" db="EMBL/GenBank/DDBJ databases">
        <authorList>
            <consortium name="NIH - Mammalian Gene Collection (MGC) project"/>
        </authorList>
    </citation>
    <scope>NUCLEOTIDE SEQUENCE [LARGE SCALE MRNA]</scope>
    <source>
        <strain>Hereford</strain>
        <tissue>Fetal pons</tissue>
    </source>
</reference>
<name>NPY_BOVIN</name>
<comment type="function">
    <text evidence="1">NPY is implicated in the control of feeding and in secretion of gonadotrophin-release hormone.</text>
</comment>
<comment type="subcellular location">
    <subcellularLocation>
        <location>Secreted</location>
    </subcellularLocation>
    <subcellularLocation>
        <location evidence="3">Cytoplasmic vesicle</location>
        <location evidence="3">Secretory vesicle</location>
        <location evidence="3">Neuronal dense core vesicle</location>
    </subcellularLocation>
</comment>
<comment type="PTM">
    <text evidence="2">The neuropeptide Y form is cleaved at Pro-30 by the prolyl endopeptidase FAP (seprase) activity (in vitro).</text>
</comment>
<comment type="similarity">
    <text evidence="4">Belongs to the NPY family.</text>
</comment>
<gene>
    <name type="primary">NPY</name>
</gene>